<feature type="signal peptide" evidence="1">
    <location>
        <begin position="1"/>
        <end position="17"/>
    </location>
</feature>
<feature type="chain" id="PRO_0000014579" description="T-cell surface glycoprotein CD1b">
    <location>
        <begin position="18"/>
        <end position="333"/>
    </location>
</feature>
<feature type="topological domain" description="Extracellular" evidence="1">
    <location>
        <begin position="18"/>
        <end position="303"/>
    </location>
</feature>
<feature type="transmembrane region" description="Helical" evidence="1">
    <location>
        <begin position="304"/>
        <end position="324"/>
    </location>
</feature>
<feature type="topological domain" description="Cytoplasmic" evidence="1">
    <location>
        <begin position="325"/>
        <end position="333"/>
    </location>
</feature>
<feature type="domain" description="Ig-like">
    <location>
        <begin position="185"/>
        <end position="295"/>
    </location>
</feature>
<feature type="short sequence motif" description="Internalization signal">
    <location>
        <begin position="329"/>
        <end position="332"/>
    </location>
</feature>
<feature type="glycosylation site" description="N-linked (GlcNAc...) asparagine" evidence="7">
    <location>
        <position position="38"/>
    </location>
</feature>
<feature type="glycosylation site" description="N-linked (GlcNAc...) asparagine" evidence="7 8">
    <location>
        <position position="75"/>
    </location>
</feature>
<feature type="glycosylation site" description="N-linked (GlcNAc...) asparagine" evidence="1">
    <location>
        <position position="146"/>
    </location>
</feature>
<feature type="glycosylation site" description="N-linked (GlcNAc...) asparagine" evidence="1">
    <location>
        <position position="258"/>
    </location>
</feature>
<feature type="disulfide bond" evidence="4 6 7 10 11 12">
    <location>
        <begin position="120"/>
        <end position="184"/>
    </location>
</feature>
<feature type="disulfide bond" evidence="4 6 7 10 11 12">
    <location>
        <begin position="149"/>
        <end position="163"/>
    </location>
</feature>
<feature type="disulfide bond" evidence="4 6 7 10 11 12">
    <location>
        <begin position="224"/>
        <end position="279"/>
    </location>
</feature>
<feature type="splice variant" id="VSP_016911" description="In isoform 2." evidence="9">
    <location>
        <begin position="242"/>
        <end position="296"/>
    </location>
</feature>
<feature type="mutagenesis site" description="Strongly reduced internalization and trafficking to endosomes." evidence="3">
    <original>YQ</original>
    <variation>AA</variation>
    <location>
        <begin position="329"/>
        <end position="330"/>
    </location>
</feature>
<feature type="strand" evidence="13">
    <location>
        <begin position="27"/>
        <end position="38"/>
    </location>
</feature>
<feature type="strand" evidence="13">
    <location>
        <begin position="41"/>
        <end position="50"/>
    </location>
</feature>
<feature type="strand" evidence="13">
    <location>
        <begin position="53"/>
        <end position="59"/>
    </location>
</feature>
<feature type="turn" evidence="13">
    <location>
        <begin position="60"/>
        <end position="63"/>
    </location>
</feature>
<feature type="strand" evidence="13">
    <location>
        <begin position="64"/>
        <end position="67"/>
    </location>
</feature>
<feature type="turn" evidence="13">
    <location>
        <begin position="70"/>
        <end position="75"/>
    </location>
</feature>
<feature type="helix" evidence="13">
    <location>
        <begin position="78"/>
        <end position="102"/>
    </location>
</feature>
<feature type="turn" evidence="13">
    <location>
        <begin position="103"/>
        <end position="107"/>
    </location>
</feature>
<feature type="strand" evidence="13">
    <location>
        <begin position="110"/>
        <end position="122"/>
    </location>
</feature>
<feature type="strand" evidence="13">
    <location>
        <begin position="128"/>
        <end position="136"/>
    </location>
</feature>
<feature type="strand" evidence="13">
    <location>
        <begin position="139"/>
        <end position="145"/>
    </location>
</feature>
<feature type="strand" evidence="13">
    <location>
        <begin position="148"/>
        <end position="151"/>
    </location>
</feature>
<feature type="helix" evidence="13">
    <location>
        <begin position="153"/>
        <end position="155"/>
    </location>
</feature>
<feature type="helix" evidence="13">
    <location>
        <begin position="156"/>
        <end position="166"/>
    </location>
</feature>
<feature type="helix" evidence="13">
    <location>
        <begin position="172"/>
        <end position="181"/>
    </location>
</feature>
<feature type="helix" evidence="13">
    <location>
        <begin position="183"/>
        <end position="194"/>
    </location>
</feature>
<feature type="helix" evidence="13">
    <location>
        <begin position="196"/>
        <end position="199"/>
    </location>
</feature>
<feature type="strand" evidence="13">
    <location>
        <begin position="206"/>
        <end position="211"/>
    </location>
</feature>
<feature type="strand" evidence="13">
    <location>
        <begin position="219"/>
        <end position="232"/>
    </location>
</feature>
<feature type="strand" evidence="13">
    <location>
        <begin position="235"/>
        <end position="240"/>
    </location>
</feature>
<feature type="strand" evidence="14">
    <location>
        <begin position="248"/>
        <end position="250"/>
    </location>
</feature>
<feature type="strand" evidence="13">
    <location>
        <begin position="254"/>
        <end position="256"/>
    </location>
</feature>
<feature type="turn" evidence="13">
    <location>
        <begin position="257"/>
        <end position="259"/>
    </location>
</feature>
<feature type="strand" evidence="13">
    <location>
        <begin position="260"/>
        <end position="270"/>
    </location>
</feature>
<feature type="helix" evidence="13">
    <location>
        <begin position="271"/>
        <end position="273"/>
    </location>
</feature>
<feature type="strand" evidence="15">
    <location>
        <begin position="274"/>
        <end position="276"/>
    </location>
</feature>
<feature type="strand" evidence="13">
    <location>
        <begin position="277"/>
        <end position="282"/>
    </location>
</feature>
<feature type="helix" evidence="13">
    <location>
        <begin position="284"/>
        <end position="286"/>
    </location>
</feature>
<feature type="strand" evidence="13">
    <location>
        <begin position="291"/>
        <end position="294"/>
    </location>
</feature>
<sequence length="333" mass="36939">MLLLPFQLLAVLFPGGNSEHAFQGPTSFHVIQTSSFTNSTWAQTQGSGWLDDLQIHGWDSDSGTAIFLKPWSKGNFSDKEVAELEEIFRVYIFGFAREVQDFAGDFQMKYPFEIQGIAGCELHSGGAIVSFLRGALGGLDFLSVKNASCVPSPEGGSRAQKFCALIIQYQGIMETVRILLYETCPRYLLGVLNAGKADLQRQVKPEAWLSSGPSPGPGRLQLVCHVSGFYPKPVWVMWMRGEQEQQGTQLGDILPNANWTWYLRATLDVADGEAAGLSCRVKHSSLEGQDIILYWRNPTSIGSIVLAIIVPSLLLLLCLALWYMRRRSYQNIP</sequence>
<evidence type="ECO:0000255" key="1"/>
<evidence type="ECO:0000269" key="2">
    <source>
    </source>
</evidence>
<evidence type="ECO:0000269" key="3">
    <source>
    </source>
</evidence>
<evidence type="ECO:0000269" key="4">
    <source>
    </source>
</evidence>
<evidence type="ECO:0000269" key="5">
    <source>
    </source>
</evidence>
<evidence type="ECO:0000269" key="6">
    <source>
    </source>
</evidence>
<evidence type="ECO:0000269" key="7">
    <source>
    </source>
</evidence>
<evidence type="ECO:0000269" key="8">
    <source>
    </source>
</evidence>
<evidence type="ECO:0000305" key="9"/>
<evidence type="ECO:0007744" key="10">
    <source>
        <dbReference type="PDB" id="1GZP"/>
    </source>
</evidence>
<evidence type="ECO:0007744" key="11">
    <source>
        <dbReference type="PDB" id="1UQS"/>
    </source>
</evidence>
<evidence type="ECO:0007744" key="12">
    <source>
        <dbReference type="PDB" id="2H26"/>
    </source>
</evidence>
<evidence type="ECO:0007829" key="13">
    <source>
        <dbReference type="PDB" id="5WL1"/>
    </source>
</evidence>
<evidence type="ECO:0007829" key="14">
    <source>
        <dbReference type="PDB" id="6CUG"/>
    </source>
</evidence>
<evidence type="ECO:0007829" key="15">
    <source>
        <dbReference type="PDB" id="8DV4"/>
    </source>
</evidence>
<keyword id="KW-0002">3D-structure</keyword>
<keyword id="KW-1064">Adaptive immunity</keyword>
<keyword id="KW-0025">Alternative splicing</keyword>
<keyword id="KW-1003">Cell membrane</keyword>
<keyword id="KW-1015">Disulfide bond</keyword>
<keyword id="KW-0967">Endosome</keyword>
<keyword id="KW-0325">Glycoprotein</keyword>
<keyword id="KW-0391">Immunity</keyword>
<keyword id="KW-0393">Immunoglobulin domain</keyword>
<keyword id="KW-0458">Lysosome</keyword>
<keyword id="KW-0472">Membrane</keyword>
<keyword id="KW-1267">Proteomics identification</keyword>
<keyword id="KW-1185">Reference proteome</keyword>
<keyword id="KW-0732">Signal</keyword>
<keyword id="KW-0812">Transmembrane</keyword>
<keyword id="KW-1133">Transmembrane helix</keyword>
<comment type="function">
    <text evidence="3 5">Antigen-presenting protein that binds self and non-self lipid and glycolipid antigens and presents them to T-cell receptors on natural killer T-cells.</text>
</comment>
<comment type="subunit">
    <text evidence="5 6 7">Heterodimer with B2M (beta-2-microglobulin). Interacts with saposin C.</text>
</comment>
<comment type="interaction">
    <interactant intactId="EBI-1033762">
        <id>P29016</id>
    </interactant>
    <interactant intactId="EBI-714718">
        <id>P61769</id>
        <label>B2M</label>
    </interactant>
    <organismsDiffer>false</organismsDiffer>
    <experiments>6</experiments>
</comment>
<comment type="subcellular location">
    <subcellularLocation>
        <location evidence="2 3 5">Cell membrane</location>
        <topology evidence="1">Single-pass type I membrane protein</topology>
    </subcellularLocation>
    <subcellularLocation>
        <location evidence="2 5">Endosome membrane</location>
        <topology evidence="1">Single-pass type I membrane protein</topology>
    </subcellularLocation>
    <subcellularLocation>
        <location evidence="2 3 5">Lysosome membrane</location>
        <topology evidence="1">Single-pass type I membrane protein</topology>
    </subcellularLocation>
    <text evidence="2 3 5">Subject to intracellular trafficking between the cell membrane, endosomes and lysosomes.</text>
</comment>
<comment type="alternative products">
    <event type="alternative splicing"/>
    <isoform>
        <id>P29016-1</id>
        <name>1</name>
        <sequence type="displayed"/>
    </isoform>
    <isoform>
        <id>P29016-2</id>
        <name>2</name>
        <sequence type="described" ref="VSP_016911"/>
    </isoform>
</comment>
<comment type="tissue specificity">
    <text>Expressed on cortical thymocytes, on certain T-cell leukemias, and in various other tissues.</text>
</comment>
<comment type="miscellaneous">
    <text>During protein synthesis and maturation, CD1 family members bind endogenous lipids that are replaced by lipid or glycolipid antigens when the proteins are internalized and pass through endosomes or lysosomes, before trafficking back to the cell surface. Interaction with saposin C is required for the loading of bacterial lipid antigens onto CD1B in the lysosome.</text>
</comment>
<organism>
    <name type="scientific">Homo sapiens</name>
    <name type="common">Human</name>
    <dbReference type="NCBI Taxonomy" id="9606"/>
    <lineage>
        <taxon>Eukaryota</taxon>
        <taxon>Metazoa</taxon>
        <taxon>Chordata</taxon>
        <taxon>Craniata</taxon>
        <taxon>Vertebrata</taxon>
        <taxon>Euteleostomi</taxon>
        <taxon>Mammalia</taxon>
        <taxon>Eutheria</taxon>
        <taxon>Euarchontoglires</taxon>
        <taxon>Primates</taxon>
        <taxon>Haplorrhini</taxon>
        <taxon>Catarrhini</taxon>
        <taxon>Hominidae</taxon>
        <taxon>Homo</taxon>
    </lineage>
</organism>
<name>CD1B_HUMAN</name>
<accession>P29016</accession>
<accession>Q5TDK9</accession>
<accession>Q5TDL0</accession>
<accession>Q9UMM2</accession>
<dbReference type="EMBL" id="M22173">
    <property type="protein sequence ID" value="AAA51940.1"/>
    <property type="molecule type" value="Genomic_DNA"/>
</dbReference>
<dbReference type="EMBL" id="M22168">
    <property type="protein sequence ID" value="AAA51940.1"/>
    <property type="status" value="JOINED"/>
    <property type="molecule type" value="Genomic_DNA"/>
</dbReference>
<dbReference type="EMBL" id="M22169">
    <property type="protein sequence ID" value="AAA51940.1"/>
    <property type="status" value="JOINED"/>
    <property type="molecule type" value="Genomic_DNA"/>
</dbReference>
<dbReference type="EMBL" id="M22170">
    <property type="protein sequence ID" value="AAA51940.1"/>
    <property type="status" value="JOINED"/>
    <property type="molecule type" value="Genomic_DNA"/>
</dbReference>
<dbReference type="EMBL" id="M22171">
    <property type="protein sequence ID" value="AAA51940.1"/>
    <property type="status" value="JOINED"/>
    <property type="molecule type" value="Genomic_DNA"/>
</dbReference>
<dbReference type="EMBL" id="M22172">
    <property type="protein sequence ID" value="AAA51940.1"/>
    <property type="status" value="JOINED"/>
    <property type="molecule type" value="Genomic_DNA"/>
</dbReference>
<dbReference type="EMBL" id="M28826">
    <property type="protein sequence ID" value="AAA51939.1"/>
    <property type="molecule type" value="mRNA"/>
</dbReference>
<dbReference type="EMBL" id="AL121986">
    <property type="status" value="NOT_ANNOTATED_CDS"/>
    <property type="molecule type" value="Genomic_DNA"/>
</dbReference>
<dbReference type="EMBL" id="BC069481">
    <property type="protein sequence ID" value="AAH69481.1"/>
    <property type="molecule type" value="mRNA"/>
</dbReference>
<dbReference type="EMBL" id="BC074747">
    <property type="protein sequence ID" value="AAH74747.1"/>
    <property type="molecule type" value="mRNA"/>
</dbReference>
<dbReference type="EMBL" id="BC104216">
    <property type="protein sequence ID" value="AAI04217.1"/>
    <property type="molecule type" value="mRNA"/>
</dbReference>
<dbReference type="EMBL" id="BC104217">
    <property type="protein sequence ID" value="AAI04218.1"/>
    <property type="molecule type" value="mRNA"/>
</dbReference>
<dbReference type="EMBL" id="M14665">
    <property type="protein sequence ID" value="AAA51936.1"/>
    <property type="molecule type" value="Genomic_DNA"/>
</dbReference>
<dbReference type="CCDS" id="CCDS1176.1">
    <molecule id="P29016-1"/>
</dbReference>
<dbReference type="PIR" id="B39957">
    <property type="entry name" value="HLHUCB"/>
</dbReference>
<dbReference type="RefSeq" id="NP_001755.1">
    <molecule id="P29016-1"/>
    <property type="nucleotide sequence ID" value="NM_001764.3"/>
</dbReference>
<dbReference type="RefSeq" id="XP_011508421.1">
    <molecule id="P29016-2"/>
    <property type="nucleotide sequence ID" value="XM_011510119.4"/>
</dbReference>
<dbReference type="RefSeq" id="XP_054195511.1">
    <molecule id="P29016-2"/>
    <property type="nucleotide sequence ID" value="XM_054339536.1"/>
</dbReference>
<dbReference type="PDB" id="1GZP">
    <property type="method" value="X-ray"/>
    <property type="resolution" value="2.80 A"/>
    <property type="chains" value="A=18-295"/>
</dbReference>
<dbReference type="PDB" id="1GZQ">
    <property type="method" value="X-ray"/>
    <property type="resolution" value="2.26 A"/>
    <property type="chains" value="A=18-295"/>
</dbReference>
<dbReference type="PDB" id="1UQS">
    <property type="method" value="X-ray"/>
    <property type="resolution" value="3.10 A"/>
    <property type="chains" value="A=18-295"/>
</dbReference>
<dbReference type="PDB" id="2H26">
    <property type="method" value="X-ray"/>
    <property type="resolution" value="1.80 A"/>
    <property type="chains" value="A=19-298"/>
</dbReference>
<dbReference type="PDB" id="3OV6">
    <property type="method" value="X-ray"/>
    <property type="resolution" value="2.50 A"/>
    <property type="chains" value="A=166-295"/>
</dbReference>
<dbReference type="PDB" id="3T8X">
    <property type="method" value="X-ray"/>
    <property type="resolution" value="1.90 A"/>
    <property type="chains" value="A/C=19-298"/>
</dbReference>
<dbReference type="PDB" id="4ONO">
    <property type="method" value="X-ray"/>
    <property type="resolution" value="2.70 A"/>
    <property type="chains" value="A=201-295"/>
</dbReference>
<dbReference type="PDB" id="5C9J">
    <property type="method" value="X-ray"/>
    <property type="resolution" value="2.40 A"/>
    <property type="chains" value="A=203-295"/>
</dbReference>
<dbReference type="PDB" id="5L2J">
    <property type="method" value="X-ray"/>
    <property type="resolution" value="1.65 A"/>
    <property type="chains" value="A=20-296"/>
</dbReference>
<dbReference type="PDB" id="5L2K">
    <property type="method" value="X-ray"/>
    <property type="resolution" value="3.20 A"/>
    <property type="chains" value="A=20-296"/>
</dbReference>
<dbReference type="PDB" id="5WKE">
    <property type="method" value="X-ray"/>
    <property type="resolution" value="1.69 A"/>
    <property type="chains" value="A=20-296"/>
</dbReference>
<dbReference type="PDB" id="5WKG">
    <property type="method" value="X-ray"/>
    <property type="resolution" value="2.06 A"/>
    <property type="chains" value="A=20-296"/>
</dbReference>
<dbReference type="PDB" id="5WKI">
    <property type="method" value="X-ray"/>
    <property type="resolution" value="2.75 A"/>
    <property type="chains" value="A=20-296"/>
</dbReference>
<dbReference type="PDB" id="5WL1">
    <property type="method" value="X-ray"/>
    <property type="resolution" value="1.38 A"/>
    <property type="chains" value="A=20-296"/>
</dbReference>
<dbReference type="PDB" id="6CUG">
    <property type="method" value="X-ray"/>
    <property type="resolution" value="2.40 A"/>
    <property type="chains" value="A=20-296"/>
</dbReference>
<dbReference type="PDB" id="6D64">
    <property type="method" value="X-ray"/>
    <property type="resolution" value="1.70 A"/>
    <property type="chains" value="A=20-296"/>
</dbReference>
<dbReference type="PDB" id="8DV3">
    <property type="method" value="X-ray"/>
    <property type="resolution" value="1.90 A"/>
    <property type="chains" value="A=20-296"/>
</dbReference>
<dbReference type="PDB" id="8DV4">
    <property type="method" value="X-ray"/>
    <property type="resolution" value="2.40 A"/>
    <property type="chains" value="A=20-296"/>
</dbReference>
<dbReference type="PDB" id="8GLE">
    <property type="method" value="X-ray"/>
    <property type="resolution" value="1.85 A"/>
    <property type="chains" value="A=20-296"/>
</dbReference>
<dbReference type="PDB" id="8GLF">
    <property type="method" value="X-ray"/>
    <property type="resolution" value="2.00 A"/>
    <property type="chains" value="A=20-296"/>
</dbReference>
<dbReference type="PDB" id="8GLG">
    <property type="method" value="X-ray"/>
    <property type="resolution" value="1.60 A"/>
    <property type="chains" value="A=20-296"/>
</dbReference>
<dbReference type="PDB" id="8GLH">
    <property type="method" value="X-ray"/>
    <property type="resolution" value="1.83 A"/>
    <property type="chains" value="A=20-296"/>
</dbReference>
<dbReference type="PDB" id="8GLI">
    <property type="method" value="X-ray"/>
    <property type="resolution" value="2.10 A"/>
    <property type="chains" value="A=20-296"/>
</dbReference>
<dbReference type="PDB" id="8ZOX">
    <property type="method" value="EM"/>
    <property type="resolution" value="3.18 A"/>
    <property type="chains" value="A=18-295"/>
</dbReference>
<dbReference type="PDBsum" id="1GZP"/>
<dbReference type="PDBsum" id="1GZQ"/>
<dbReference type="PDBsum" id="1UQS"/>
<dbReference type="PDBsum" id="2H26"/>
<dbReference type="PDBsum" id="3OV6"/>
<dbReference type="PDBsum" id="3T8X"/>
<dbReference type="PDBsum" id="4ONO"/>
<dbReference type="PDBsum" id="5C9J"/>
<dbReference type="PDBsum" id="5L2J"/>
<dbReference type="PDBsum" id="5L2K"/>
<dbReference type="PDBsum" id="5WKE"/>
<dbReference type="PDBsum" id="5WKG"/>
<dbReference type="PDBsum" id="5WKI"/>
<dbReference type="PDBsum" id="5WL1"/>
<dbReference type="PDBsum" id="6CUG"/>
<dbReference type="PDBsum" id="6D64"/>
<dbReference type="PDBsum" id="8DV3"/>
<dbReference type="PDBsum" id="8DV4"/>
<dbReference type="PDBsum" id="8GLE"/>
<dbReference type="PDBsum" id="8GLF"/>
<dbReference type="PDBsum" id="8GLG"/>
<dbReference type="PDBsum" id="8GLH"/>
<dbReference type="PDBsum" id="8GLI"/>
<dbReference type="PDBsum" id="8ZOX"/>
<dbReference type="EMDB" id="EMD-60321"/>
<dbReference type="SMR" id="P29016"/>
<dbReference type="BioGRID" id="107348">
    <property type="interactions" value="89"/>
</dbReference>
<dbReference type="FunCoup" id="P29016">
    <property type="interactions" value="305"/>
</dbReference>
<dbReference type="IntAct" id="P29016">
    <property type="interactions" value="61"/>
</dbReference>
<dbReference type="MINT" id="P29016"/>
<dbReference type="STRING" id="9606.ENSP00000357150"/>
<dbReference type="GlyCosmos" id="P29016">
    <property type="glycosylation" value="4 sites, No reported glycans"/>
</dbReference>
<dbReference type="GlyGen" id="P29016">
    <property type="glycosylation" value="4 sites"/>
</dbReference>
<dbReference type="iPTMnet" id="P29016"/>
<dbReference type="PhosphoSitePlus" id="P29016"/>
<dbReference type="BioMuta" id="CD1B"/>
<dbReference type="DMDM" id="115962"/>
<dbReference type="MassIVE" id="P29016"/>
<dbReference type="PaxDb" id="9606-ENSP00000357150"/>
<dbReference type="PeptideAtlas" id="P29016"/>
<dbReference type="ProteomicsDB" id="54511">
    <molecule id="P29016-1"/>
</dbReference>
<dbReference type="ProteomicsDB" id="54512">
    <molecule id="P29016-2"/>
</dbReference>
<dbReference type="ABCD" id="P29016">
    <property type="antibodies" value="1 sequenced antibody"/>
</dbReference>
<dbReference type="Antibodypedia" id="20455">
    <property type="antibodies" value="675 antibodies from 37 providers"/>
</dbReference>
<dbReference type="DNASU" id="910"/>
<dbReference type="Ensembl" id="ENST00000368168.4">
    <molecule id="P29016-1"/>
    <property type="protein sequence ID" value="ENSP00000357150.3"/>
    <property type="gene ID" value="ENSG00000158485.11"/>
</dbReference>
<dbReference type="GeneID" id="910"/>
<dbReference type="KEGG" id="hsa:910"/>
<dbReference type="MANE-Select" id="ENST00000368168.4">
    <property type="protein sequence ID" value="ENSP00000357150.3"/>
    <property type="RefSeq nucleotide sequence ID" value="NM_001764.3"/>
    <property type="RefSeq protein sequence ID" value="NP_001755.1"/>
</dbReference>
<dbReference type="UCSC" id="uc001frx.4">
    <molecule id="P29016-1"/>
    <property type="organism name" value="human"/>
</dbReference>
<dbReference type="AGR" id="HGNC:1635"/>
<dbReference type="CTD" id="910"/>
<dbReference type="DisGeNET" id="910"/>
<dbReference type="GeneCards" id="CD1B"/>
<dbReference type="HGNC" id="HGNC:1635">
    <property type="gene designation" value="CD1B"/>
</dbReference>
<dbReference type="HPA" id="ENSG00000158485">
    <property type="expression patterns" value="Tissue enriched (lymphoid)"/>
</dbReference>
<dbReference type="MIM" id="188360">
    <property type="type" value="gene"/>
</dbReference>
<dbReference type="neXtProt" id="NX_P29016"/>
<dbReference type="OpenTargets" id="ENSG00000158485"/>
<dbReference type="PharmGKB" id="PA26194"/>
<dbReference type="VEuPathDB" id="HostDB:ENSG00000158485"/>
<dbReference type="eggNOG" id="ENOG502SJH6">
    <property type="taxonomic scope" value="Eukaryota"/>
</dbReference>
<dbReference type="GeneTree" id="ENSGT01120000271825"/>
<dbReference type="HOGENOM" id="CLU_047501_9_2_1"/>
<dbReference type="InParanoid" id="P29016"/>
<dbReference type="OMA" id="VLPNANW"/>
<dbReference type="OrthoDB" id="8890485at2759"/>
<dbReference type="PAN-GO" id="P29016">
    <property type="GO annotations" value="9 GO annotations based on evolutionary models"/>
</dbReference>
<dbReference type="PhylomeDB" id="P29016"/>
<dbReference type="TreeFam" id="TF336723"/>
<dbReference type="PathwayCommons" id="P29016"/>
<dbReference type="Reactome" id="R-HSA-198933">
    <property type="pathway name" value="Immunoregulatory interactions between a Lymphoid and a non-Lymphoid cell"/>
</dbReference>
<dbReference type="SignaLink" id="P29016"/>
<dbReference type="BioGRID-ORCS" id="910">
    <property type="hits" value="6 hits in 1150 CRISPR screens"/>
</dbReference>
<dbReference type="EvolutionaryTrace" id="P29016"/>
<dbReference type="GenomeRNAi" id="910"/>
<dbReference type="Pharos" id="P29016">
    <property type="development level" value="Tbio"/>
</dbReference>
<dbReference type="PRO" id="PR:P29016"/>
<dbReference type="Proteomes" id="UP000005640">
    <property type="component" value="Chromosome 1"/>
</dbReference>
<dbReference type="RNAct" id="P29016">
    <property type="molecule type" value="protein"/>
</dbReference>
<dbReference type="Bgee" id="ENSG00000158485">
    <property type="expression patterns" value="Expressed in thymus and 71 other cell types or tissues"/>
</dbReference>
<dbReference type="ExpressionAtlas" id="P29016">
    <property type="expression patterns" value="baseline and differential"/>
</dbReference>
<dbReference type="GO" id="GO:0009986">
    <property type="term" value="C:cell surface"/>
    <property type="evidence" value="ECO:0007005"/>
    <property type="project" value="UniProtKB"/>
</dbReference>
<dbReference type="GO" id="GO:0005829">
    <property type="term" value="C:cytosol"/>
    <property type="evidence" value="ECO:0000314"/>
    <property type="project" value="HPA"/>
</dbReference>
<dbReference type="GO" id="GO:0010008">
    <property type="term" value="C:endosome membrane"/>
    <property type="evidence" value="ECO:0007669"/>
    <property type="project" value="UniProtKB-SubCell"/>
</dbReference>
<dbReference type="GO" id="GO:0009897">
    <property type="term" value="C:external side of plasma membrane"/>
    <property type="evidence" value="ECO:0000318"/>
    <property type="project" value="GO_Central"/>
</dbReference>
<dbReference type="GO" id="GO:0005615">
    <property type="term" value="C:extracellular space"/>
    <property type="evidence" value="ECO:0000318"/>
    <property type="project" value="GO_Central"/>
</dbReference>
<dbReference type="GO" id="GO:0005794">
    <property type="term" value="C:Golgi apparatus"/>
    <property type="evidence" value="ECO:0000314"/>
    <property type="project" value="HPA"/>
</dbReference>
<dbReference type="GO" id="GO:0043231">
    <property type="term" value="C:intracellular membrane-bounded organelle"/>
    <property type="evidence" value="ECO:0000314"/>
    <property type="project" value="HPA"/>
</dbReference>
<dbReference type="GO" id="GO:0005765">
    <property type="term" value="C:lysosomal membrane"/>
    <property type="evidence" value="ECO:0007669"/>
    <property type="project" value="UniProtKB-SubCell"/>
</dbReference>
<dbReference type="GO" id="GO:0016020">
    <property type="term" value="C:membrane"/>
    <property type="evidence" value="ECO:0000304"/>
    <property type="project" value="ProtInc"/>
</dbReference>
<dbReference type="GO" id="GO:0005886">
    <property type="term" value="C:plasma membrane"/>
    <property type="evidence" value="ECO:0000304"/>
    <property type="project" value="Reactome"/>
</dbReference>
<dbReference type="GO" id="GO:0030883">
    <property type="term" value="F:endogenous lipid antigen binding"/>
    <property type="evidence" value="ECO:0000318"/>
    <property type="project" value="GO_Central"/>
</dbReference>
<dbReference type="GO" id="GO:0030884">
    <property type="term" value="F:exogenous lipid antigen binding"/>
    <property type="evidence" value="ECO:0000318"/>
    <property type="project" value="GO_Central"/>
</dbReference>
<dbReference type="GO" id="GO:0071723">
    <property type="term" value="F:lipopeptide binding"/>
    <property type="evidence" value="ECO:0000318"/>
    <property type="project" value="GO_Central"/>
</dbReference>
<dbReference type="GO" id="GO:0002250">
    <property type="term" value="P:adaptive immune response"/>
    <property type="evidence" value="ECO:0007669"/>
    <property type="project" value="UniProtKB-KW"/>
</dbReference>
<dbReference type="GO" id="GO:0048006">
    <property type="term" value="P:antigen processing and presentation, endogenous lipid antigen via MHC class Ib"/>
    <property type="evidence" value="ECO:0000318"/>
    <property type="project" value="GO_Central"/>
</dbReference>
<dbReference type="GO" id="GO:0048007">
    <property type="term" value="P:antigen processing and presentation, exogenous lipid antigen via MHC class Ib"/>
    <property type="evidence" value="ECO:0000318"/>
    <property type="project" value="GO_Central"/>
</dbReference>
<dbReference type="GO" id="GO:0006955">
    <property type="term" value="P:immune response"/>
    <property type="evidence" value="ECO:0000318"/>
    <property type="project" value="GO_Central"/>
</dbReference>
<dbReference type="GO" id="GO:0001916">
    <property type="term" value="P:positive regulation of T cell mediated cytotoxicity"/>
    <property type="evidence" value="ECO:0000318"/>
    <property type="project" value="GO_Central"/>
</dbReference>
<dbReference type="CDD" id="cd21029">
    <property type="entry name" value="IgC1_CD1"/>
    <property type="match status" value="1"/>
</dbReference>
<dbReference type="FunFam" id="2.60.40.10:FF:000254">
    <property type="entry name" value="Antigen-presenting glycoprotein CD1d1"/>
    <property type="match status" value="1"/>
</dbReference>
<dbReference type="FunFam" id="3.30.500.10:FF:000002">
    <property type="entry name" value="Antigen-presenting glycoprotein CD1d1"/>
    <property type="match status" value="1"/>
</dbReference>
<dbReference type="Gene3D" id="2.60.40.10">
    <property type="entry name" value="Immunoglobulins"/>
    <property type="match status" value="1"/>
</dbReference>
<dbReference type="Gene3D" id="3.30.500.10">
    <property type="entry name" value="MHC class I-like antigen recognition-like"/>
    <property type="match status" value="1"/>
</dbReference>
<dbReference type="InterPro" id="IPR007110">
    <property type="entry name" value="Ig-like_dom"/>
</dbReference>
<dbReference type="InterPro" id="IPR036179">
    <property type="entry name" value="Ig-like_dom_sf"/>
</dbReference>
<dbReference type="InterPro" id="IPR013783">
    <property type="entry name" value="Ig-like_fold"/>
</dbReference>
<dbReference type="InterPro" id="IPR003597">
    <property type="entry name" value="Ig_C1-set"/>
</dbReference>
<dbReference type="InterPro" id="IPR050208">
    <property type="entry name" value="MHC_class-I_related"/>
</dbReference>
<dbReference type="InterPro" id="IPR011161">
    <property type="entry name" value="MHC_I-like_Ag-recog"/>
</dbReference>
<dbReference type="InterPro" id="IPR037055">
    <property type="entry name" value="MHC_I-like_Ag-recog_sf"/>
</dbReference>
<dbReference type="InterPro" id="IPR011162">
    <property type="entry name" value="MHC_I/II-like_Ag-recog"/>
</dbReference>
<dbReference type="PANTHER" id="PTHR16675">
    <property type="entry name" value="MHC CLASS I-RELATED"/>
    <property type="match status" value="1"/>
</dbReference>
<dbReference type="PANTHER" id="PTHR16675:SF130">
    <property type="entry name" value="T-CELL SURFACE GLYCOPROTEIN CD1B"/>
    <property type="match status" value="1"/>
</dbReference>
<dbReference type="Pfam" id="PF07654">
    <property type="entry name" value="C1-set"/>
    <property type="match status" value="1"/>
</dbReference>
<dbReference type="Pfam" id="PF16497">
    <property type="entry name" value="MHC_I_3"/>
    <property type="match status" value="1"/>
</dbReference>
<dbReference type="SMART" id="SM00407">
    <property type="entry name" value="IGc1"/>
    <property type="match status" value="1"/>
</dbReference>
<dbReference type="SUPFAM" id="SSF48726">
    <property type="entry name" value="Immunoglobulin"/>
    <property type="match status" value="1"/>
</dbReference>
<dbReference type="SUPFAM" id="SSF54452">
    <property type="entry name" value="MHC antigen-recognition domain"/>
    <property type="match status" value="1"/>
</dbReference>
<dbReference type="PROSITE" id="PS50835">
    <property type="entry name" value="IG_LIKE"/>
    <property type="match status" value="1"/>
</dbReference>
<protein>
    <recommendedName>
        <fullName>T-cell surface glycoprotein CD1b</fullName>
    </recommendedName>
    <cdAntigenName>CD1b</cdAntigenName>
</protein>
<reference key="1">
    <citation type="journal article" date="1987" name="Proc. Natl. Acad. Sci. U.S.A.">
        <title>Structure and expression of the human thymocyte antigens CD1a, CD1b, and CD1c.</title>
        <authorList>
            <person name="Martin L.H."/>
            <person name="Calabi F."/>
            <person name="Lefebvre F.-A."/>
            <person name="Bilsland C.A.G."/>
            <person name="Milstein C."/>
        </authorList>
    </citation>
    <scope>NUCLEOTIDE SEQUENCE [GENOMIC DNA]</scope>
</reference>
<reference key="2">
    <citation type="journal article" date="1989" name="J. Immunol.">
        <title>Expression of cDNA clones encoding the thymocyte antigens CD1a, b, c demonstrates a hierarchy of exclusion in fibroblasts.</title>
        <authorList>
            <person name="Aruffo A."/>
            <person name="Seed B."/>
        </authorList>
    </citation>
    <scope>NUCLEOTIDE SEQUENCE [MRNA] (ISOFORM 1)</scope>
</reference>
<reference key="3">
    <citation type="journal article" date="2006" name="Nature">
        <title>The DNA sequence and biological annotation of human chromosome 1.</title>
        <authorList>
            <person name="Gregory S.G."/>
            <person name="Barlow K.F."/>
            <person name="McLay K.E."/>
            <person name="Kaul R."/>
            <person name="Swarbreck D."/>
            <person name="Dunham A."/>
            <person name="Scott C.E."/>
            <person name="Howe K.L."/>
            <person name="Woodfine K."/>
            <person name="Spencer C.C.A."/>
            <person name="Jones M.C."/>
            <person name="Gillson C."/>
            <person name="Searle S."/>
            <person name="Zhou Y."/>
            <person name="Kokocinski F."/>
            <person name="McDonald L."/>
            <person name="Evans R."/>
            <person name="Phillips K."/>
            <person name="Atkinson A."/>
            <person name="Cooper R."/>
            <person name="Jones C."/>
            <person name="Hall R.E."/>
            <person name="Andrews T.D."/>
            <person name="Lloyd C."/>
            <person name="Ainscough R."/>
            <person name="Almeida J.P."/>
            <person name="Ambrose K.D."/>
            <person name="Anderson F."/>
            <person name="Andrew R.W."/>
            <person name="Ashwell R.I.S."/>
            <person name="Aubin K."/>
            <person name="Babbage A.K."/>
            <person name="Bagguley C.L."/>
            <person name="Bailey J."/>
            <person name="Beasley H."/>
            <person name="Bethel G."/>
            <person name="Bird C.P."/>
            <person name="Bray-Allen S."/>
            <person name="Brown J.Y."/>
            <person name="Brown A.J."/>
            <person name="Buckley D."/>
            <person name="Burton J."/>
            <person name="Bye J."/>
            <person name="Carder C."/>
            <person name="Chapman J.C."/>
            <person name="Clark S.Y."/>
            <person name="Clarke G."/>
            <person name="Clee C."/>
            <person name="Cobley V."/>
            <person name="Collier R.E."/>
            <person name="Corby N."/>
            <person name="Coville G.J."/>
            <person name="Davies J."/>
            <person name="Deadman R."/>
            <person name="Dunn M."/>
            <person name="Earthrowl M."/>
            <person name="Ellington A.G."/>
            <person name="Errington H."/>
            <person name="Frankish A."/>
            <person name="Frankland J."/>
            <person name="French L."/>
            <person name="Garner P."/>
            <person name="Garnett J."/>
            <person name="Gay L."/>
            <person name="Ghori M.R.J."/>
            <person name="Gibson R."/>
            <person name="Gilby L.M."/>
            <person name="Gillett W."/>
            <person name="Glithero R.J."/>
            <person name="Grafham D.V."/>
            <person name="Griffiths C."/>
            <person name="Griffiths-Jones S."/>
            <person name="Grocock R."/>
            <person name="Hammond S."/>
            <person name="Harrison E.S.I."/>
            <person name="Hart E."/>
            <person name="Haugen E."/>
            <person name="Heath P.D."/>
            <person name="Holmes S."/>
            <person name="Holt K."/>
            <person name="Howden P.J."/>
            <person name="Hunt A.R."/>
            <person name="Hunt S.E."/>
            <person name="Hunter G."/>
            <person name="Isherwood J."/>
            <person name="James R."/>
            <person name="Johnson C."/>
            <person name="Johnson D."/>
            <person name="Joy A."/>
            <person name="Kay M."/>
            <person name="Kershaw J.K."/>
            <person name="Kibukawa M."/>
            <person name="Kimberley A.M."/>
            <person name="King A."/>
            <person name="Knights A.J."/>
            <person name="Lad H."/>
            <person name="Laird G."/>
            <person name="Lawlor S."/>
            <person name="Leongamornlert D.A."/>
            <person name="Lloyd D.M."/>
            <person name="Loveland J."/>
            <person name="Lovell J."/>
            <person name="Lush M.J."/>
            <person name="Lyne R."/>
            <person name="Martin S."/>
            <person name="Mashreghi-Mohammadi M."/>
            <person name="Matthews L."/>
            <person name="Matthews N.S.W."/>
            <person name="McLaren S."/>
            <person name="Milne S."/>
            <person name="Mistry S."/>
            <person name="Moore M.J.F."/>
            <person name="Nickerson T."/>
            <person name="O'Dell C.N."/>
            <person name="Oliver K."/>
            <person name="Palmeiri A."/>
            <person name="Palmer S.A."/>
            <person name="Parker A."/>
            <person name="Patel D."/>
            <person name="Pearce A.V."/>
            <person name="Peck A.I."/>
            <person name="Pelan S."/>
            <person name="Phelps K."/>
            <person name="Phillimore B.J."/>
            <person name="Plumb R."/>
            <person name="Rajan J."/>
            <person name="Raymond C."/>
            <person name="Rouse G."/>
            <person name="Saenphimmachak C."/>
            <person name="Sehra H.K."/>
            <person name="Sheridan E."/>
            <person name="Shownkeen R."/>
            <person name="Sims S."/>
            <person name="Skuce C.D."/>
            <person name="Smith M."/>
            <person name="Steward C."/>
            <person name="Subramanian S."/>
            <person name="Sycamore N."/>
            <person name="Tracey A."/>
            <person name="Tromans A."/>
            <person name="Van Helmond Z."/>
            <person name="Wall M."/>
            <person name="Wallis J.M."/>
            <person name="White S."/>
            <person name="Whitehead S.L."/>
            <person name="Wilkinson J.E."/>
            <person name="Willey D.L."/>
            <person name="Williams H."/>
            <person name="Wilming L."/>
            <person name="Wray P.W."/>
            <person name="Wu Z."/>
            <person name="Coulson A."/>
            <person name="Vaudin M."/>
            <person name="Sulston J.E."/>
            <person name="Durbin R.M."/>
            <person name="Hubbard T."/>
            <person name="Wooster R."/>
            <person name="Dunham I."/>
            <person name="Carter N.P."/>
            <person name="McVean G."/>
            <person name="Ross M.T."/>
            <person name="Harrow J."/>
            <person name="Olson M.V."/>
            <person name="Beck S."/>
            <person name="Rogers J."/>
            <person name="Bentley D.R."/>
        </authorList>
    </citation>
    <scope>NUCLEOTIDE SEQUENCE [LARGE SCALE GENOMIC DNA]</scope>
</reference>
<reference key="4">
    <citation type="journal article" date="2004" name="Genome Res.">
        <title>The status, quality, and expansion of the NIH full-length cDNA project: the Mammalian Gene Collection (MGC).</title>
        <authorList>
            <consortium name="The MGC Project Team"/>
        </authorList>
    </citation>
    <scope>NUCLEOTIDE SEQUENCE [LARGE SCALE MRNA] (ISOFORM 1)</scope>
    <source>
        <tissue>Lung</tissue>
    </source>
</reference>
<reference key="5">
    <citation type="journal article" date="1986" name="Proc. Natl. Acad. Sci. U.S.A.">
        <title>Isolation of CD1 genes: a family of major histocompatibility complex-related differentiation antigens.</title>
        <authorList>
            <person name="Martin L.H."/>
            <person name="Calabi F."/>
            <person name="Milstein C."/>
        </authorList>
    </citation>
    <scope>NUCLEOTIDE SEQUENCE [GENOMIC DNA] OF 203-295</scope>
</reference>
<reference key="6">
    <citation type="journal article" date="2000" name="Immunity">
        <title>The alphabeta T cell response to self-glycolipids shows a novel mechanism of CD1b loading and a requirement for complex oligosaccharides.</title>
        <authorList>
            <person name="Shamshiev A."/>
            <person name="Donda A."/>
            <person name="Prigozy T.I."/>
            <person name="Mori L."/>
            <person name="Chigorno V."/>
            <person name="Benedict C.A."/>
            <person name="Kappos L."/>
            <person name="Sonnino S."/>
            <person name="Kronenberg M."/>
            <person name="De Libero G."/>
        </authorList>
    </citation>
    <scope>FUNCTION</scope>
    <scope>MUTAGENESIS OF 329-TYR-GLN-330</scope>
    <scope>SUBCELLULAR LOCATION</scope>
</reference>
<reference key="7">
    <citation type="journal article" date="2000" name="J. Exp. Med.">
        <title>Human CD1b and CD1c isoforms survey different intracellular compartments for the presentation of microbial lipid antigens.</title>
        <authorList>
            <person name="Briken V."/>
            <person name="Jackman R.M."/>
            <person name="Watts G.F.M."/>
            <person name="Rogers R.A."/>
            <person name="Porcelli S.A."/>
        </authorList>
    </citation>
    <scope>SUBCELLULAR LOCATION</scope>
</reference>
<reference key="8">
    <citation type="journal article" date="2004" name="Nat. Immunol.">
        <title>Saposin C is required for lipid presentation by human CD1b.</title>
        <authorList>
            <person name="Winau F."/>
            <person name="Schwierzeck V."/>
            <person name="Hurwitz R."/>
            <person name="Remmel N."/>
            <person name="Sieling P.A."/>
            <person name="Modlin R.L."/>
            <person name="Porcelli S.A."/>
            <person name="Brinkmann V."/>
            <person name="Sugita M."/>
            <person name="Sandhoff K."/>
            <person name="Kaufmann S.H.E."/>
            <person name="Schaible U.E."/>
        </authorList>
    </citation>
    <scope>FUNCTION</scope>
    <scope>INTERACTION WITH SAPOSIN C</scope>
    <scope>SUBCELLULAR LOCATION</scope>
</reference>
<reference key="9">
    <citation type="journal article" date="2004" name="Nat. Immunol.">
        <authorList>
            <person name="Winau F."/>
            <person name="Schwierzeck V."/>
            <person name="Hurwitz R."/>
            <person name="Remmel N."/>
            <person name="Sieling P.A."/>
            <person name="Modlin R.L."/>
            <person name="Porcelli S.A."/>
            <person name="Brinkmann V."/>
            <person name="Sugita M."/>
            <person name="Sandhoff K."/>
            <person name="Kaufmann S.H.E."/>
            <person name="Schaible U.E."/>
        </authorList>
    </citation>
    <scope>ERRATUM OF PUBMED:14716313</scope>
</reference>
<reference key="10">
    <citation type="journal article" date="2009" name="Nat. Biotechnol.">
        <title>Mass-spectrometric identification and relative quantification of N-linked cell surface glycoproteins.</title>
        <authorList>
            <person name="Wollscheid B."/>
            <person name="Bausch-Fluck D."/>
            <person name="Henderson C."/>
            <person name="O'Brien R."/>
            <person name="Bibel M."/>
            <person name="Schiess R."/>
            <person name="Aebersold R."/>
            <person name="Watts J.D."/>
        </authorList>
    </citation>
    <scope>GLYCOSYLATION [LARGE SCALE ANALYSIS] AT ASN-75</scope>
    <source>
        <tissue>Leukemic T-cell</tissue>
    </source>
</reference>
<reference key="11">
    <citation type="journal article" date="2002" name="Nat. Immunol.">
        <title>Structure of human CD1b with bound ligands at 2.3 A, a maze for alkyl chains.</title>
        <authorList>
            <person name="Gadola S.D."/>
            <person name="Zaccai N.R."/>
            <person name="Harlos K."/>
            <person name="Shepherd D."/>
            <person name="Castro-Palomino J.C."/>
            <person name="Ritter G."/>
            <person name="Schmidt R.R."/>
            <person name="Jones E.Y."/>
            <person name="Cerundolo V."/>
        </authorList>
    </citation>
    <scope>X-RAY CRYSTALLOGRAPHY (2.3 ANGSTROMS) OF 18-295 IN COMPLEXES WITH B2M; GANGLIOSIDE GM2 AND PHOSPHATIDYLINOSITOL</scope>
    <scope>DISULFIDE BONDS</scope>
</reference>
<reference key="12">
    <citation type="journal article" date="2004" name="J. Immunol.">
        <title>The crystal structure of human CD1b with a bound bacterial glycolipid.</title>
        <authorList>
            <person name="Batuwangala T."/>
            <person name="Shepherd D."/>
            <person name="Gadola S.D."/>
            <person name="Gibson K.J.C."/>
            <person name="Zaccai N.R."/>
            <person name="Fersht A.R."/>
            <person name="Besra G.S."/>
            <person name="Cerundolo V."/>
            <person name="Jones E.Y."/>
        </authorList>
    </citation>
    <scope>X-RAY CRYSTALLOGRAPHY (3.1 ANGSTROMS) OF 18-295 IN COMPLEX WITH B2M AND GLUCOSE MONOMYCOLATE</scope>
    <scope>DISULFIDE BONDS</scope>
</reference>
<reference key="13">
    <citation type="journal article" date="2006" name="EMBO J.">
        <title>Endogenous phosphatidylcholine and a long spacer ligand stabilize the lipid-binding groove of CD1b.</title>
        <authorList>
            <person name="Garcia-Alles L.F."/>
            <person name="Versluis K."/>
            <person name="Maveyraud L."/>
            <person name="Vallina A.T."/>
            <person name="Sansano S."/>
            <person name="Bello N.F."/>
            <person name="Gober H.-J."/>
            <person name="Guillet V."/>
            <person name="de la Salle H."/>
            <person name="Puzo G."/>
            <person name="Mori L."/>
            <person name="Heck A.J.R."/>
            <person name="De Libero G."/>
            <person name="Mourey L."/>
        </authorList>
    </citation>
    <scope>X-RAY CRYSTALLOGRAPHY (1.8 ANGSTROMS) OF 19-298 IN COMPLEX WITH B2M; PHOSPHATIDYLCHOLINE AND SPACER LIGAND</scope>
    <scope>GLYCOSYLATION AT ASN-38 AND ASN-75</scope>
    <scope>IDENTIFICATION BY MASS SPECTROMETRY</scope>
    <scope>DISULFIDE BONDS</scope>
</reference>
<proteinExistence type="evidence at protein level"/>
<gene>
    <name type="primary">CD1B</name>
</gene>